<keyword id="KW-0378">Hydrolase</keyword>
<name>GCH4_STAAR</name>
<organism>
    <name type="scientific">Staphylococcus aureus (strain MRSA252)</name>
    <dbReference type="NCBI Taxonomy" id="282458"/>
    <lineage>
        <taxon>Bacteria</taxon>
        <taxon>Bacillati</taxon>
        <taxon>Bacillota</taxon>
        <taxon>Bacilli</taxon>
        <taxon>Bacillales</taxon>
        <taxon>Staphylococcaceae</taxon>
        <taxon>Staphylococcus</taxon>
    </lineage>
</organism>
<protein>
    <recommendedName>
        <fullName evidence="1">GTP cyclohydrolase FolE2</fullName>
        <ecNumber evidence="1">3.5.4.16</ecNumber>
    </recommendedName>
</protein>
<reference key="1">
    <citation type="journal article" date="2004" name="Proc. Natl. Acad. Sci. U.S.A.">
        <title>Complete genomes of two clinical Staphylococcus aureus strains: evidence for the rapid evolution of virulence and drug resistance.</title>
        <authorList>
            <person name="Holden M.T.G."/>
            <person name="Feil E.J."/>
            <person name="Lindsay J.A."/>
            <person name="Peacock S.J."/>
            <person name="Day N.P.J."/>
            <person name="Enright M.C."/>
            <person name="Foster T.J."/>
            <person name="Moore C.E."/>
            <person name="Hurst L."/>
            <person name="Atkin R."/>
            <person name="Barron A."/>
            <person name="Bason N."/>
            <person name="Bentley S.D."/>
            <person name="Chillingworth C."/>
            <person name="Chillingworth T."/>
            <person name="Churcher C."/>
            <person name="Clark L."/>
            <person name="Corton C."/>
            <person name="Cronin A."/>
            <person name="Doggett J."/>
            <person name="Dowd L."/>
            <person name="Feltwell T."/>
            <person name="Hance Z."/>
            <person name="Harris B."/>
            <person name="Hauser H."/>
            <person name="Holroyd S."/>
            <person name="Jagels K."/>
            <person name="James K.D."/>
            <person name="Lennard N."/>
            <person name="Line A."/>
            <person name="Mayes R."/>
            <person name="Moule S."/>
            <person name="Mungall K."/>
            <person name="Ormond D."/>
            <person name="Quail M.A."/>
            <person name="Rabbinowitsch E."/>
            <person name="Rutherford K.M."/>
            <person name="Sanders M."/>
            <person name="Sharp S."/>
            <person name="Simmonds M."/>
            <person name="Stevens K."/>
            <person name="Whitehead S."/>
            <person name="Barrell B.G."/>
            <person name="Spratt B.G."/>
            <person name="Parkhill J."/>
        </authorList>
    </citation>
    <scope>NUCLEOTIDE SEQUENCE [LARGE SCALE GENOMIC DNA]</scope>
    <source>
        <strain>MRSA252</strain>
    </source>
</reference>
<gene>
    <name evidence="1" type="primary">folE2</name>
    <name type="ordered locus">SAR0570</name>
</gene>
<accession>Q6GJA3</accession>
<dbReference type="EC" id="3.5.4.16" evidence="1"/>
<dbReference type="EMBL" id="BX571856">
    <property type="protein sequence ID" value="CAG39591.1"/>
    <property type="molecule type" value="Genomic_DNA"/>
</dbReference>
<dbReference type="RefSeq" id="WP_000134231.1">
    <property type="nucleotide sequence ID" value="NC_002952.2"/>
</dbReference>
<dbReference type="SMR" id="Q6GJA3"/>
<dbReference type="KEGG" id="sar:SAR0570"/>
<dbReference type="HOGENOM" id="CLU_062816_1_1_9"/>
<dbReference type="UniPathway" id="UPA00848">
    <property type="reaction ID" value="UER00151"/>
</dbReference>
<dbReference type="Proteomes" id="UP000000596">
    <property type="component" value="Chromosome"/>
</dbReference>
<dbReference type="GO" id="GO:0003934">
    <property type="term" value="F:GTP cyclohydrolase I activity"/>
    <property type="evidence" value="ECO:0007669"/>
    <property type="project" value="UniProtKB-UniRule"/>
</dbReference>
<dbReference type="GO" id="GO:0046654">
    <property type="term" value="P:tetrahydrofolate biosynthetic process"/>
    <property type="evidence" value="ECO:0007669"/>
    <property type="project" value="UniProtKB-UniRule"/>
</dbReference>
<dbReference type="Gene3D" id="3.10.270.10">
    <property type="entry name" value="Urate Oxidase"/>
    <property type="match status" value="1"/>
</dbReference>
<dbReference type="HAMAP" id="MF_01527_B">
    <property type="entry name" value="GTP_cyclohydrol_B"/>
    <property type="match status" value="1"/>
</dbReference>
<dbReference type="InterPro" id="IPR022838">
    <property type="entry name" value="GTP_cyclohydrolase_FolE2"/>
</dbReference>
<dbReference type="InterPro" id="IPR003801">
    <property type="entry name" value="GTP_cyclohydrolase_FolE2/MptA"/>
</dbReference>
<dbReference type="NCBIfam" id="NF010200">
    <property type="entry name" value="PRK13674.1-1"/>
    <property type="match status" value="1"/>
</dbReference>
<dbReference type="PANTHER" id="PTHR36445">
    <property type="entry name" value="GTP CYCLOHYDROLASE MPTA"/>
    <property type="match status" value="1"/>
</dbReference>
<dbReference type="PANTHER" id="PTHR36445:SF1">
    <property type="entry name" value="GTP CYCLOHYDROLASE MPTA"/>
    <property type="match status" value="1"/>
</dbReference>
<dbReference type="Pfam" id="PF02649">
    <property type="entry name" value="GCHY-1"/>
    <property type="match status" value="1"/>
</dbReference>
<comment type="function">
    <text evidence="1">Converts GTP to 7,8-dihydroneopterin triphosphate.</text>
</comment>
<comment type="catalytic activity">
    <reaction evidence="1">
        <text>GTP + H2O = 7,8-dihydroneopterin 3'-triphosphate + formate + H(+)</text>
        <dbReference type="Rhea" id="RHEA:17473"/>
        <dbReference type="ChEBI" id="CHEBI:15377"/>
        <dbReference type="ChEBI" id="CHEBI:15378"/>
        <dbReference type="ChEBI" id="CHEBI:15740"/>
        <dbReference type="ChEBI" id="CHEBI:37565"/>
        <dbReference type="ChEBI" id="CHEBI:58462"/>
        <dbReference type="EC" id="3.5.4.16"/>
    </reaction>
</comment>
<comment type="pathway">
    <text evidence="1">Cofactor biosynthesis; 7,8-dihydroneopterin triphosphate biosynthesis; 7,8-dihydroneopterin triphosphate from GTP: step 1/1.</text>
</comment>
<comment type="similarity">
    <text evidence="1">Belongs to the GTP cyclohydrolase IV family.</text>
</comment>
<feature type="chain" id="PRO_0000147727" description="GTP cyclohydrolase FolE2">
    <location>
        <begin position="1"/>
        <end position="292"/>
    </location>
</feature>
<feature type="site" description="May be catalytically important" evidence="1">
    <location>
        <position position="176"/>
    </location>
</feature>
<evidence type="ECO:0000255" key="1">
    <source>
        <dbReference type="HAMAP-Rule" id="MF_01527"/>
    </source>
</evidence>
<proteinExistence type="inferred from homology"/>
<sequence length="292" mass="33443">MTEFDLSTREGRWKHFGSVDPIEGTKPTTKNEMTDLQSTHKDFLFEIEEVGIKNLVYPVLVDQYQTAGTFSFSTSLTKDEKGINMSRIIESVEKHYDNGIELEFNTLYQVLCTLQTNMKQNAAGVDVSGKWFFDRYSPTTNIKAVGNADVTYGLAIDGDKVTRKELTIEATVTTLCPCSKEISEYSAHNQRGVVTVKTYINKDQDIVDDYKNKILDAMEANASSILYPILKRPDEKRVTERAYENPRFVEDLIRLIAADLVEFDWLEGFDIECRNEESIHQHDAFAKLKYRK</sequence>